<reference key="1">
    <citation type="submission" date="2000-07" db="EMBL/GenBank/DDBJ databases">
        <title>Potential binding-partners of comitin.</title>
        <authorList>
            <person name="Schreiner T."/>
            <person name="Kuspa A."/>
            <person name="Noegel A.A."/>
        </authorList>
    </citation>
    <scope>NUCLEOTIDE SEQUENCE [MRNA]</scope>
    <source>
        <strain>AX2</strain>
    </source>
</reference>
<reference key="2">
    <citation type="journal article" date="2002" name="Nature">
        <title>Sequence and analysis of chromosome 2 of Dictyostelium discoideum.</title>
        <authorList>
            <person name="Gloeckner G."/>
            <person name="Eichinger L."/>
            <person name="Szafranski K."/>
            <person name="Pachebat J.A."/>
            <person name="Bankier A.T."/>
            <person name="Dear P.H."/>
            <person name="Lehmann R."/>
            <person name="Baumgart C."/>
            <person name="Parra G."/>
            <person name="Abril J.F."/>
            <person name="Guigo R."/>
            <person name="Kumpf K."/>
            <person name="Tunggal B."/>
            <person name="Cox E.C."/>
            <person name="Quail M.A."/>
            <person name="Platzer M."/>
            <person name="Rosenthal A."/>
            <person name="Noegel A.A."/>
        </authorList>
    </citation>
    <scope>NUCLEOTIDE SEQUENCE [LARGE SCALE GENOMIC DNA]</scope>
    <source>
        <strain>AX4</strain>
    </source>
</reference>
<reference key="3">
    <citation type="journal article" date="2005" name="Nature">
        <title>The genome of the social amoeba Dictyostelium discoideum.</title>
        <authorList>
            <person name="Eichinger L."/>
            <person name="Pachebat J.A."/>
            <person name="Gloeckner G."/>
            <person name="Rajandream M.A."/>
            <person name="Sucgang R."/>
            <person name="Berriman M."/>
            <person name="Song J."/>
            <person name="Olsen R."/>
            <person name="Szafranski K."/>
            <person name="Xu Q."/>
            <person name="Tunggal B."/>
            <person name="Kummerfeld S."/>
            <person name="Madera M."/>
            <person name="Konfortov B.A."/>
            <person name="Rivero F."/>
            <person name="Bankier A.T."/>
            <person name="Lehmann R."/>
            <person name="Hamlin N."/>
            <person name="Davies R."/>
            <person name="Gaudet P."/>
            <person name="Fey P."/>
            <person name="Pilcher K."/>
            <person name="Chen G."/>
            <person name="Saunders D."/>
            <person name="Sodergren E.J."/>
            <person name="Davis P."/>
            <person name="Kerhornou A."/>
            <person name="Nie X."/>
            <person name="Hall N."/>
            <person name="Anjard C."/>
            <person name="Hemphill L."/>
            <person name="Bason N."/>
            <person name="Farbrother P."/>
            <person name="Desany B."/>
            <person name="Just E."/>
            <person name="Morio T."/>
            <person name="Rost R."/>
            <person name="Churcher C.M."/>
            <person name="Cooper J."/>
            <person name="Haydock S."/>
            <person name="van Driessche N."/>
            <person name="Cronin A."/>
            <person name="Goodhead I."/>
            <person name="Muzny D.M."/>
            <person name="Mourier T."/>
            <person name="Pain A."/>
            <person name="Lu M."/>
            <person name="Harper D."/>
            <person name="Lindsay R."/>
            <person name="Hauser H."/>
            <person name="James K.D."/>
            <person name="Quiles M."/>
            <person name="Madan Babu M."/>
            <person name="Saito T."/>
            <person name="Buchrieser C."/>
            <person name="Wardroper A."/>
            <person name="Felder M."/>
            <person name="Thangavelu M."/>
            <person name="Johnson D."/>
            <person name="Knights A."/>
            <person name="Loulseged H."/>
            <person name="Mungall K.L."/>
            <person name="Oliver K."/>
            <person name="Price C."/>
            <person name="Quail M.A."/>
            <person name="Urushihara H."/>
            <person name="Hernandez J."/>
            <person name="Rabbinowitsch E."/>
            <person name="Steffen D."/>
            <person name="Sanders M."/>
            <person name="Ma J."/>
            <person name="Kohara Y."/>
            <person name="Sharp S."/>
            <person name="Simmonds M.N."/>
            <person name="Spiegler S."/>
            <person name="Tivey A."/>
            <person name="Sugano S."/>
            <person name="White B."/>
            <person name="Walker D."/>
            <person name="Woodward J.R."/>
            <person name="Winckler T."/>
            <person name="Tanaka Y."/>
            <person name="Shaulsky G."/>
            <person name="Schleicher M."/>
            <person name="Weinstock G.M."/>
            <person name="Rosenthal A."/>
            <person name="Cox E.C."/>
            <person name="Chisholm R.L."/>
            <person name="Gibbs R.A."/>
            <person name="Loomis W.F."/>
            <person name="Platzer M."/>
            <person name="Kay R.R."/>
            <person name="Williams J.G."/>
            <person name="Dear P.H."/>
            <person name="Noegel A.A."/>
            <person name="Barrell B.G."/>
            <person name="Kuspa A."/>
        </authorList>
    </citation>
    <scope>NUCLEOTIDE SEQUENCE [LARGE SCALE GENOMIC DNA]</scope>
    <source>
        <strain>AX4</strain>
    </source>
</reference>
<gene>
    <name type="primary">rpl36</name>
    <name type="ORF">DDB_G0271668</name>
</gene>
<comment type="similarity">
    <text evidence="2">Belongs to the eukaryotic ribosomal protein eL36 family.</text>
</comment>
<evidence type="ECO:0000256" key="1">
    <source>
        <dbReference type="SAM" id="MobiDB-lite"/>
    </source>
</evidence>
<evidence type="ECO:0000305" key="2"/>
<keyword id="KW-1185">Reference proteome</keyword>
<keyword id="KW-0687">Ribonucleoprotein</keyword>
<keyword id="KW-0689">Ribosomal protein</keyword>
<proteinExistence type="inferred from homology"/>
<sequence>MSSAATKPVKRSGIIKGFNKGHAVAKRTVTSTFKKQVVTKRVAAIRDVIREISGFSPYERRVSELLKSGLDKRALKVAKKRLGSIQAGKKKRDDIANINRKASAK</sequence>
<organism>
    <name type="scientific">Dictyostelium discoideum</name>
    <name type="common">Social amoeba</name>
    <dbReference type="NCBI Taxonomy" id="44689"/>
    <lineage>
        <taxon>Eukaryota</taxon>
        <taxon>Amoebozoa</taxon>
        <taxon>Evosea</taxon>
        <taxon>Eumycetozoa</taxon>
        <taxon>Dictyostelia</taxon>
        <taxon>Dictyosteliales</taxon>
        <taxon>Dictyosteliaceae</taxon>
        <taxon>Dictyostelium</taxon>
    </lineage>
</organism>
<feature type="chain" id="PRO_0000312711" description="Large ribosomal subunit protein eL36">
    <location>
        <begin position="1"/>
        <end position="105"/>
    </location>
</feature>
<feature type="region of interest" description="Disordered" evidence="1">
    <location>
        <begin position="86"/>
        <end position="105"/>
    </location>
</feature>
<name>RL36_DICDI</name>
<protein>
    <recommendedName>
        <fullName evidence="2">Large ribosomal subunit protein eL36</fullName>
    </recommendedName>
    <alternativeName>
        <fullName>60S ribosomal protein L36</fullName>
    </alternativeName>
</protein>
<dbReference type="EMBL" id="AY007805">
    <property type="protein sequence ID" value="AAG32534.1"/>
    <property type="molecule type" value="mRNA"/>
</dbReference>
<dbReference type="EMBL" id="AAFI02000006">
    <property type="protein sequence ID" value="EAL71524.1"/>
    <property type="molecule type" value="Genomic_DNA"/>
</dbReference>
<dbReference type="RefSeq" id="XP_645463.1">
    <property type="nucleotide sequence ID" value="XM_640371.1"/>
</dbReference>
<dbReference type="SMR" id="Q55AQ9"/>
<dbReference type="FunCoup" id="Q55AQ9">
    <property type="interactions" value="462"/>
</dbReference>
<dbReference type="STRING" id="44689.Q55AQ9"/>
<dbReference type="PaxDb" id="44689-DDB0185019"/>
<dbReference type="EnsemblProtists" id="EAL71524">
    <property type="protein sequence ID" value="EAL71524"/>
    <property type="gene ID" value="DDB_G0271668"/>
</dbReference>
<dbReference type="GeneID" id="8618091"/>
<dbReference type="KEGG" id="ddi:DDB_G0271668"/>
<dbReference type="dictyBase" id="DDB_G0271668">
    <property type="gene designation" value="rpl36"/>
</dbReference>
<dbReference type="VEuPathDB" id="AmoebaDB:DDB_G0271668"/>
<dbReference type="eggNOG" id="KOG3452">
    <property type="taxonomic scope" value="Eukaryota"/>
</dbReference>
<dbReference type="HOGENOM" id="CLU_140672_0_0_1"/>
<dbReference type="InParanoid" id="Q55AQ9"/>
<dbReference type="OMA" id="NKGHKTE"/>
<dbReference type="PhylomeDB" id="Q55AQ9"/>
<dbReference type="Reactome" id="R-DDI-156827">
    <property type="pathway name" value="L13a-mediated translational silencing of Ceruloplasmin expression"/>
</dbReference>
<dbReference type="Reactome" id="R-DDI-1799339">
    <property type="pathway name" value="SRP-dependent cotranslational protein targeting to membrane"/>
</dbReference>
<dbReference type="Reactome" id="R-DDI-72689">
    <property type="pathway name" value="Formation of a pool of free 40S subunits"/>
</dbReference>
<dbReference type="Reactome" id="R-DDI-72706">
    <property type="pathway name" value="GTP hydrolysis and joining of the 60S ribosomal subunit"/>
</dbReference>
<dbReference type="Reactome" id="R-DDI-975956">
    <property type="pathway name" value="Nonsense Mediated Decay (NMD) independent of the Exon Junction Complex (EJC)"/>
</dbReference>
<dbReference type="Reactome" id="R-DDI-975957">
    <property type="pathway name" value="Nonsense Mediated Decay (NMD) enhanced by the Exon Junction Complex (EJC)"/>
</dbReference>
<dbReference type="PRO" id="PR:Q55AQ9"/>
<dbReference type="Proteomes" id="UP000002195">
    <property type="component" value="Chromosome 2"/>
</dbReference>
<dbReference type="GO" id="GO:0022625">
    <property type="term" value="C:cytosolic large ribosomal subunit"/>
    <property type="evidence" value="ECO:0000318"/>
    <property type="project" value="GO_Central"/>
</dbReference>
<dbReference type="GO" id="GO:0003723">
    <property type="term" value="F:RNA binding"/>
    <property type="evidence" value="ECO:0000250"/>
    <property type="project" value="dictyBase"/>
</dbReference>
<dbReference type="GO" id="GO:0003735">
    <property type="term" value="F:structural constituent of ribosome"/>
    <property type="evidence" value="ECO:0000250"/>
    <property type="project" value="dictyBase"/>
</dbReference>
<dbReference type="GO" id="GO:0002181">
    <property type="term" value="P:cytoplasmic translation"/>
    <property type="evidence" value="ECO:0000318"/>
    <property type="project" value="GO_Central"/>
</dbReference>
<dbReference type="GO" id="GO:0006412">
    <property type="term" value="P:translation"/>
    <property type="evidence" value="ECO:0000250"/>
    <property type="project" value="dictyBase"/>
</dbReference>
<dbReference type="FunFam" id="1.10.10.1760:FF:000001">
    <property type="entry name" value="60S ribosomal protein L36"/>
    <property type="match status" value="1"/>
</dbReference>
<dbReference type="Gene3D" id="1.10.10.1760">
    <property type="entry name" value="60S ribosomal protein L36"/>
    <property type="match status" value="1"/>
</dbReference>
<dbReference type="InterPro" id="IPR000509">
    <property type="entry name" value="Ribosomal_eL36"/>
</dbReference>
<dbReference type="InterPro" id="IPR038097">
    <property type="entry name" value="Ribosomal_eL36_sf"/>
</dbReference>
<dbReference type="PANTHER" id="PTHR10114">
    <property type="entry name" value="60S RIBOSOMAL PROTEIN L36"/>
    <property type="match status" value="1"/>
</dbReference>
<dbReference type="Pfam" id="PF01158">
    <property type="entry name" value="Ribosomal_L36e"/>
    <property type="match status" value="1"/>
</dbReference>
<accession>Q55AQ9</accession>
<accession>Q8MNF9</accession>
<accession>Q9GS20</accession>